<protein>
    <recommendedName>
        <fullName evidence="1">Geranylgeranylglyceryl phosphate synthase</fullName>
        <shortName evidence="1">GGGP synthase</shortName>
        <shortName evidence="1">GGGPS</shortName>
        <ecNumber evidence="1 2">2.5.1.41</ecNumber>
    </recommendedName>
    <alternativeName>
        <fullName evidence="1">(S)-3-O-geranylgeranylglyceryl phosphate synthase</fullName>
    </alternativeName>
    <alternativeName>
        <fullName evidence="1">Phosphoglycerol geranylgeranyltransferase</fullName>
    </alternativeName>
</protein>
<name>GGGPS_FLAJ1</name>
<organism>
    <name type="scientific">Flavobacterium johnsoniae (strain ATCC 17061 / DSM 2064 / JCM 8514 / BCRC 14874 / CCUG 350202 / NBRC 14942 / NCIMB 11054 / UW101)</name>
    <name type="common">Cytophaga johnsonae</name>
    <dbReference type="NCBI Taxonomy" id="376686"/>
    <lineage>
        <taxon>Bacteria</taxon>
        <taxon>Pseudomonadati</taxon>
        <taxon>Bacteroidota</taxon>
        <taxon>Flavobacteriia</taxon>
        <taxon>Flavobacteriales</taxon>
        <taxon>Flavobacteriaceae</taxon>
        <taxon>Flavobacterium</taxon>
    </lineage>
</organism>
<reference key="1">
    <citation type="journal article" date="2009" name="Appl. Environ. Microbiol.">
        <title>Novel features of the polysaccharide-digesting gliding bacterium Flavobacterium johnsoniae as revealed by genome sequence analysis.</title>
        <authorList>
            <person name="McBride M.J."/>
            <person name="Xie G."/>
            <person name="Martens E.C."/>
            <person name="Lapidus A."/>
            <person name="Henrissat B."/>
            <person name="Rhodes R.G."/>
            <person name="Goltsman E."/>
            <person name="Wang W."/>
            <person name="Xu J."/>
            <person name="Hunnicutt D.W."/>
            <person name="Staroscik A.M."/>
            <person name="Hoover T.R."/>
            <person name="Cheng Y.Q."/>
            <person name="Stein J.L."/>
        </authorList>
    </citation>
    <scope>NUCLEOTIDE SEQUENCE [LARGE SCALE GENOMIC DNA]</scope>
    <source>
        <strain>ATCC 17061 / DSM 2064 / JCM 8514 / BCRC 14874 / CCUG 350202 / NBRC 14942 / NCIMB 11054 / UW101</strain>
    </source>
</reference>
<reference evidence="4" key="2">
    <citation type="journal article" date="2014" name="Mol. Microbiol.">
        <title>A comprehensive analysis of the geranylgeranylglyceryl phosphate synthase enzyme family identifies novel members and reveals mechanisms of substrate specificity and quaternary structure organization.</title>
        <authorList>
            <person name="Peterhoff D."/>
            <person name="Beer B."/>
            <person name="Rajendran C."/>
            <person name="Kumpula E.P."/>
            <person name="Kapetaniou E."/>
            <person name="Guldan H."/>
            <person name="Wierenga R.K."/>
            <person name="Sterner R."/>
            <person name="Babinger P."/>
        </authorList>
    </citation>
    <scope>X-RAY CRYSTALLOGRAPHY (1.52 ANGSTROMS) IN COMPLEX WITH GLYCEROL 1-PHOSPHATE</scope>
    <scope>FUNCTION</scope>
    <scope>CATALYTIC ACTIVITY</scope>
    <scope>SUBUNIT</scope>
    <scope>MUTAGENESIS OF ILE-90</scope>
</reference>
<sequence>MEQKILTTIHQQILEAKKNGQKLLAILLDPDKIVWENLDHLLLKINQSPATHIFVGGSIVESTIIEDLIAQLKQKTRLPVVIFPGDPSQISPKADAILFLSLLSGRNPDYLIEYQVQAAPILKKTNLEVISTGYILIESGNETAVARVSKTEPLNRENFDLALATAQAGEMLGSKLIYLEAGSGAKKPVPLEMISVISQNVEIPIIVGGGIVDLHGIKKAYNAGADLVVIGTAFENDSHFFDS</sequence>
<evidence type="ECO:0000255" key="1">
    <source>
        <dbReference type="HAMAP-Rule" id="MF_00112"/>
    </source>
</evidence>
<evidence type="ECO:0000269" key="2">
    <source>
    </source>
</evidence>
<evidence type="ECO:0000312" key="3">
    <source>
        <dbReference type="EMBL" id="ABQ04616.1"/>
    </source>
</evidence>
<evidence type="ECO:0007744" key="4">
    <source>
        <dbReference type="PDB" id="4JEJ"/>
    </source>
</evidence>
<evidence type="ECO:0007829" key="5">
    <source>
        <dbReference type="PDB" id="4JEJ"/>
    </source>
</evidence>
<feature type="chain" id="PRO_0000436908" description="Geranylgeranylglyceryl phosphate synthase">
    <location>
        <begin position="1"/>
        <end position="243"/>
    </location>
</feature>
<feature type="binding site" evidence="1">
    <location>
        <position position="29"/>
    </location>
    <ligand>
        <name>Mg(2+)</name>
        <dbReference type="ChEBI" id="CHEBI:18420"/>
    </ligand>
</feature>
<feature type="binding site" evidence="1">
    <location>
        <position position="58"/>
    </location>
    <ligand>
        <name>Mg(2+)</name>
        <dbReference type="ChEBI" id="CHEBI:18420"/>
    </ligand>
</feature>
<feature type="binding site" evidence="1 2 4">
    <location>
        <begin position="178"/>
        <end position="184"/>
    </location>
    <ligand>
        <name>sn-glycerol 1-phosphate</name>
        <dbReference type="ChEBI" id="CHEBI:57685"/>
    </ligand>
</feature>
<feature type="binding site" evidence="1 2 4">
    <location>
        <begin position="209"/>
        <end position="210"/>
    </location>
    <ligand>
        <name>sn-glycerol 1-phosphate</name>
        <dbReference type="ChEBI" id="CHEBI:57685"/>
    </ligand>
</feature>
<feature type="binding site" evidence="1 2 4">
    <location>
        <begin position="231"/>
        <end position="232"/>
    </location>
    <ligand>
        <name>sn-glycerol 1-phosphate</name>
        <dbReference type="ChEBI" id="CHEBI:57685"/>
    </ligand>
</feature>
<feature type="mutagenesis site" description="Accepts HepPP as substrate." evidence="2">
    <original>I</original>
    <variation>A</variation>
    <location>
        <position position="90"/>
    </location>
</feature>
<feature type="helix" evidence="5">
    <location>
        <begin position="9"/>
        <end position="18"/>
    </location>
</feature>
<feature type="strand" evidence="5">
    <location>
        <begin position="23"/>
        <end position="28"/>
    </location>
</feature>
<feature type="helix" evidence="5">
    <location>
        <begin position="30"/>
        <end position="32"/>
    </location>
</feature>
<feature type="helix" evidence="5">
    <location>
        <begin position="35"/>
        <end position="37"/>
    </location>
</feature>
<feature type="helix" evidence="5">
    <location>
        <begin position="38"/>
        <end position="47"/>
    </location>
</feature>
<feature type="strand" evidence="5">
    <location>
        <begin position="51"/>
        <end position="56"/>
    </location>
</feature>
<feature type="helix" evidence="5">
    <location>
        <begin position="62"/>
        <end position="75"/>
    </location>
</feature>
<feature type="strand" evidence="5">
    <location>
        <begin position="80"/>
        <end position="83"/>
    </location>
</feature>
<feature type="helix" evidence="5">
    <location>
        <begin position="87"/>
        <end position="89"/>
    </location>
</feature>
<feature type="strand" evidence="5">
    <location>
        <begin position="94"/>
        <end position="102"/>
    </location>
</feature>
<feature type="turn" evidence="5">
    <location>
        <begin position="108"/>
        <end position="112"/>
    </location>
</feature>
<feature type="helix" evidence="5">
    <location>
        <begin position="113"/>
        <end position="122"/>
    </location>
</feature>
<feature type="strand" evidence="5">
    <location>
        <begin position="128"/>
        <end position="137"/>
    </location>
</feature>
<feature type="helix" evidence="5">
    <location>
        <begin position="144"/>
        <end position="149"/>
    </location>
</feature>
<feature type="helix" evidence="5">
    <location>
        <begin position="159"/>
        <end position="172"/>
    </location>
</feature>
<feature type="strand" evidence="5">
    <location>
        <begin position="175"/>
        <end position="180"/>
    </location>
</feature>
<feature type="helix" evidence="5">
    <location>
        <begin position="191"/>
        <end position="200"/>
    </location>
</feature>
<feature type="strand" evidence="5">
    <location>
        <begin position="205"/>
        <end position="210"/>
    </location>
</feature>
<feature type="helix" evidence="5">
    <location>
        <begin position="214"/>
        <end position="223"/>
    </location>
</feature>
<feature type="strand" evidence="5">
    <location>
        <begin position="226"/>
        <end position="230"/>
    </location>
</feature>
<feature type="helix" evidence="5">
    <location>
        <begin position="232"/>
        <end position="236"/>
    </location>
</feature>
<feature type="turn" evidence="5">
    <location>
        <begin position="238"/>
        <end position="241"/>
    </location>
</feature>
<keyword id="KW-0002">3D-structure</keyword>
<keyword id="KW-0444">Lipid biosynthesis</keyword>
<keyword id="KW-0443">Lipid metabolism</keyword>
<keyword id="KW-0460">Magnesium</keyword>
<keyword id="KW-0479">Metal-binding</keyword>
<keyword id="KW-0594">Phospholipid biosynthesis</keyword>
<keyword id="KW-1208">Phospholipid metabolism</keyword>
<keyword id="KW-0808">Transferase</keyword>
<gene>
    <name evidence="3" type="ordered locus">Fjoh_1584</name>
</gene>
<accession>A5FJK8</accession>
<comment type="function">
    <text evidence="1 2">Prenyltransferase that catalyzes the transfer of the geranylgeranyl moiety of geranylgeranyl diphosphate (GGPP) to the C3 hydroxyl of sn-glycerol-1-phosphate (G1P).</text>
</comment>
<comment type="catalytic activity">
    <reaction evidence="1 2">
        <text>sn-glycerol 1-phosphate + (2E,6E,10E)-geranylgeranyl diphosphate = sn-3-O-(geranylgeranyl)glycerol 1-phosphate + diphosphate</text>
        <dbReference type="Rhea" id="RHEA:23404"/>
        <dbReference type="ChEBI" id="CHEBI:33019"/>
        <dbReference type="ChEBI" id="CHEBI:57677"/>
        <dbReference type="ChEBI" id="CHEBI:57685"/>
        <dbReference type="ChEBI" id="CHEBI:58756"/>
        <dbReference type="EC" id="2.5.1.41"/>
    </reaction>
</comment>
<comment type="cofactor">
    <cofactor evidence="1">
        <name>Mg(2+)</name>
        <dbReference type="ChEBI" id="CHEBI:18420"/>
    </cofactor>
</comment>
<comment type="subunit">
    <text evidence="2">Homodimer.</text>
</comment>
<comment type="similarity">
    <text evidence="1">Belongs to the GGGP/HepGP synthase family. Group II subfamily.</text>
</comment>
<dbReference type="EC" id="2.5.1.41" evidence="1 2"/>
<dbReference type="EMBL" id="CP000685">
    <property type="protein sequence ID" value="ABQ04616.1"/>
    <property type="molecule type" value="Genomic_DNA"/>
</dbReference>
<dbReference type="RefSeq" id="WP_012023660.1">
    <property type="nucleotide sequence ID" value="NC_009441.1"/>
</dbReference>
<dbReference type="PDB" id="4JEJ">
    <property type="method" value="X-ray"/>
    <property type="resolution" value="1.52 A"/>
    <property type="chains" value="A=1-243"/>
</dbReference>
<dbReference type="PDBsum" id="4JEJ"/>
<dbReference type="SMR" id="A5FJK8"/>
<dbReference type="STRING" id="376686.Fjoh_1584"/>
<dbReference type="KEGG" id="fjo:Fjoh_1584"/>
<dbReference type="eggNOG" id="COG1646">
    <property type="taxonomic scope" value="Bacteria"/>
</dbReference>
<dbReference type="HOGENOM" id="CLU_068610_0_0_10"/>
<dbReference type="OrthoDB" id="9807235at2"/>
<dbReference type="EvolutionaryTrace" id="A5FJK8"/>
<dbReference type="Proteomes" id="UP000006694">
    <property type="component" value="Chromosome"/>
</dbReference>
<dbReference type="GO" id="GO:0005737">
    <property type="term" value="C:cytoplasm"/>
    <property type="evidence" value="ECO:0007669"/>
    <property type="project" value="InterPro"/>
</dbReference>
<dbReference type="GO" id="GO:0000107">
    <property type="term" value="F:imidazoleglycerol-phosphate synthase activity"/>
    <property type="evidence" value="ECO:0007669"/>
    <property type="project" value="TreeGrafter"/>
</dbReference>
<dbReference type="GO" id="GO:0000287">
    <property type="term" value="F:magnesium ion binding"/>
    <property type="evidence" value="ECO:0007669"/>
    <property type="project" value="UniProtKB-UniRule"/>
</dbReference>
<dbReference type="GO" id="GO:0047294">
    <property type="term" value="F:phosphoglycerol geranylgeranyltransferase activity"/>
    <property type="evidence" value="ECO:0007669"/>
    <property type="project" value="UniProtKB-UniRule"/>
</dbReference>
<dbReference type="GO" id="GO:0046474">
    <property type="term" value="P:glycerophospholipid biosynthetic process"/>
    <property type="evidence" value="ECO:0007669"/>
    <property type="project" value="UniProtKB-UniRule"/>
</dbReference>
<dbReference type="Gene3D" id="3.20.20.390">
    <property type="entry name" value="FMN-linked oxidoreductases"/>
    <property type="match status" value="1"/>
</dbReference>
<dbReference type="HAMAP" id="MF_00112">
    <property type="entry name" value="GGGP_HepGP_synthase"/>
    <property type="match status" value="1"/>
</dbReference>
<dbReference type="InterPro" id="IPR038597">
    <property type="entry name" value="GGGP/HepGP_synthase_sf"/>
</dbReference>
<dbReference type="InterPro" id="IPR008205">
    <property type="entry name" value="GGGP_HepGP_synthase"/>
</dbReference>
<dbReference type="InterPro" id="IPR010946">
    <property type="entry name" value="GGGP_synth"/>
</dbReference>
<dbReference type="InterPro" id="IPR050064">
    <property type="entry name" value="IGPS_HisA/HisF"/>
</dbReference>
<dbReference type="NCBIfam" id="TIGR01769">
    <property type="entry name" value="GGGP"/>
    <property type="match status" value="1"/>
</dbReference>
<dbReference type="NCBIfam" id="TIGR01768">
    <property type="entry name" value="GGGP-family"/>
    <property type="match status" value="1"/>
</dbReference>
<dbReference type="NCBIfam" id="NF003198">
    <property type="entry name" value="PRK04169.1-2"/>
    <property type="match status" value="1"/>
</dbReference>
<dbReference type="PANTHER" id="PTHR21235:SF22">
    <property type="entry name" value="GERANYLGERANYLGLYCERYL PHOSPHATE SYNTHASE"/>
    <property type="match status" value="1"/>
</dbReference>
<dbReference type="PANTHER" id="PTHR21235">
    <property type="entry name" value="IMIDAZOLE GLYCEROL PHOSPHATE SYNTHASE SUBUNIT HISF/H IGP SYNTHASE SUBUNIT HISF/H"/>
    <property type="match status" value="1"/>
</dbReference>
<dbReference type="Pfam" id="PF01884">
    <property type="entry name" value="PcrB"/>
    <property type="match status" value="1"/>
</dbReference>
<dbReference type="SUPFAM" id="SSF51395">
    <property type="entry name" value="FMN-linked oxidoreductases"/>
    <property type="match status" value="1"/>
</dbReference>
<proteinExistence type="evidence at protein level"/>